<organism>
    <name type="scientific">Artanema fimbriatum</name>
    <dbReference type="NCBI Taxonomy" id="303133"/>
    <lineage>
        <taxon>Eukaryota</taxon>
        <taxon>Viridiplantae</taxon>
        <taxon>Streptophyta</taxon>
        <taxon>Embryophyta</taxon>
        <taxon>Tracheophyta</taxon>
        <taxon>Spermatophyta</taxon>
        <taxon>Magnoliopsida</taxon>
        <taxon>eudicotyledons</taxon>
        <taxon>Gunneridae</taxon>
        <taxon>Pentapetalae</taxon>
        <taxon>asterids</taxon>
        <taxon>lamiids</taxon>
        <taxon>Lamiales</taxon>
        <taxon>Linderniaceae</taxon>
        <taxon>Artanema</taxon>
    </lineage>
</organism>
<reference key="1">
    <citation type="journal article" date="2005" name="Plant Biol.">
        <title>The Linderniaceae and Gratiolaceae are further lineages distinct from the Scrophulariaceae (Lamiales).</title>
        <authorList>
            <person name="Ramanzadeh R."/>
            <person name="Mueller K.F."/>
            <person name="Fischer E."/>
            <person name="Bartels D."/>
            <person name="Borsch T."/>
        </authorList>
    </citation>
    <scope>NUCLEOTIDE SEQUENCE [GENOMIC DNA]</scope>
</reference>
<accession>Q5GAA9</accession>
<name>MATK_ARTFM</name>
<keyword id="KW-0150">Chloroplast</keyword>
<keyword id="KW-0507">mRNA processing</keyword>
<keyword id="KW-0934">Plastid</keyword>
<keyword id="KW-0694">RNA-binding</keyword>
<keyword id="KW-0819">tRNA processing</keyword>
<evidence type="ECO:0000255" key="1">
    <source>
        <dbReference type="HAMAP-Rule" id="MF_01390"/>
    </source>
</evidence>
<comment type="function">
    <text evidence="1">Usually encoded in the trnK tRNA gene intron. Probably assists in splicing its own and other chloroplast group II introns.</text>
</comment>
<comment type="subcellular location">
    <subcellularLocation>
        <location>Plastid</location>
        <location>Chloroplast</location>
    </subcellularLocation>
</comment>
<comment type="similarity">
    <text evidence="1">Belongs to the intron maturase 2 family. MatK subfamily.</text>
</comment>
<gene>
    <name evidence="1" type="primary">matK</name>
</gene>
<feature type="chain" id="PRO_0000143257" description="Maturase K">
    <location>
        <begin position="1"/>
        <end position="506"/>
    </location>
</feature>
<protein>
    <recommendedName>
        <fullName evidence="1">Maturase K</fullName>
    </recommendedName>
    <alternativeName>
        <fullName evidence="1">Intron maturase</fullName>
    </alternativeName>
</protein>
<sequence>MEEIQRYLQLERSQQHDFLYPLIFQEYIYAFAHDRDFGRSILSENLGYDSKSSLLVVKRLISRMYQQNRFILSLDDSNQNPFWTCNNNFYSQTVSEGFAFIVEIPFSLRFKSCLEEKKIVNSQNLRSIHSIFPFLEDNFAHLNYILDILIPHPVHVEILVQNLRHWLKDASSLHLLRFLLNEYWNWNSLITPKKASSSFSKKNQRLFLLLYNSHVCEYEYFFVFIRNQSSHLRSTSSGVFLERIYFYEKIERLVNIFIKVKDLQANLWLVKEPCMHYVRYQRKSILASKGTSVLMNKWKCYLVTFWQWHFSLWFHPRRIYINQLSNHSLEFLGYLSSVRMNPSVVRSQILENSFLINNAIKKLETLVPIFLLIASLAKAKFCNVLGHPISKPVWADLSDSNIIDRFGRISKNLSHYYSGSSKKKSLYRVKYILRLSCARTLARKHKSTVRAFLKRLGSELLEEFLMTEEDILSLTFPKPSSALRGVYRSRIWYLDIIWINDLANYK</sequence>
<dbReference type="EMBL" id="AY667460">
    <property type="protein sequence ID" value="AAW57926.1"/>
    <property type="molecule type" value="Genomic_DNA"/>
</dbReference>
<dbReference type="GO" id="GO:0009507">
    <property type="term" value="C:chloroplast"/>
    <property type="evidence" value="ECO:0007669"/>
    <property type="project" value="UniProtKB-SubCell"/>
</dbReference>
<dbReference type="GO" id="GO:0003723">
    <property type="term" value="F:RNA binding"/>
    <property type="evidence" value="ECO:0007669"/>
    <property type="project" value="UniProtKB-KW"/>
</dbReference>
<dbReference type="GO" id="GO:0006397">
    <property type="term" value="P:mRNA processing"/>
    <property type="evidence" value="ECO:0007669"/>
    <property type="project" value="UniProtKB-KW"/>
</dbReference>
<dbReference type="GO" id="GO:0008380">
    <property type="term" value="P:RNA splicing"/>
    <property type="evidence" value="ECO:0007669"/>
    <property type="project" value="UniProtKB-UniRule"/>
</dbReference>
<dbReference type="GO" id="GO:0008033">
    <property type="term" value="P:tRNA processing"/>
    <property type="evidence" value="ECO:0007669"/>
    <property type="project" value="UniProtKB-KW"/>
</dbReference>
<dbReference type="HAMAP" id="MF_01390">
    <property type="entry name" value="MatK"/>
    <property type="match status" value="1"/>
</dbReference>
<dbReference type="InterPro" id="IPR024937">
    <property type="entry name" value="Domain_X"/>
</dbReference>
<dbReference type="InterPro" id="IPR002866">
    <property type="entry name" value="Maturase_MatK"/>
</dbReference>
<dbReference type="InterPro" id="IPR024942">
    <property type="entry name" value="Maturase_MatK_N"/>
</dbReference>
<dbReference type="PANTHER" id="PTHR34811">
    <property type="entry name" value="MATURASE K"/>
    <property type="match status" value="1"/>
</dbReference>
<dbReference type="PANTHER" id="PTHR34811:SF1">
    <property type="entry name" value="MATURASE K"/>
    <property type="match status" value="1"/>
</dbReference>
<dbReference type="Pfam" id="PF01348">
    <property type="entry name" value="Intron_maturas2"/>
    <property type="match status" value="1"/>
</dbReference>
<dbReference type="Pfam" id="PF01824">
    <property type="entry name" value="MatK_N"/>
    <property type="match status" value="1"/>
</dbReference>
<proteinExistence type="inferred from homology"/>
<geneLocation type="chloroplast"/>